<name>GPDA_RHILO</name>
<organism>
    <name type="scientific">Mesorhizobium japonicum (strain LMG 29417 / CECT 9101 / MAFF 303099)</name>
    <name type="common">Mesorhizobium loti (strain MAFF 303099)</name>
    <dbReference type="NCBI Taxonomy" id="266835"/>
    <lineage>
        <taxon>Bacteria</taxon>
        <taxon>Pseudomonadati</taxon>
        <taxon>Pseudomonadota</taxon>
        <taxon>Alphaproteobacteria</taxon>
        <taxon>Hyphomicrobiales</taxon>
        <taxon>Phyllobacteriaceae</taxon>
        <taxon>Mesorhizobium</taxon>
    </lineage>
</organism>
<protein>
    <recommendedName>
        <fullName evidence="1">Glycerol-3-phosphate dehydrogenase [NAD(P)+]</fullName>
        <ecNumber evidence="1">1.1.1.94</ecNumber>
    </recommendedName>
    <alternativeName>
        <fullName evidence="1">NAD(P)(+)-dependent glycerol-3-phosphate dehydrogenase</fullName>
    </alternativeName>
    <alternativeName>
        <fullName evidence="1">NAD(P)H-dependent dihydroxyacetone-phosphate reductase</fullName>
    </alternativeName>
</protein>
<feature type="chain" id="PRO_0000138013" description="Glycerol-3-phosphate dehydrogenase [NAD(P)+]">
    <location>
        <begin position="1"/>
        <end position="343"/>
    </location>
</feature>
<feature type="active site" description="Proton acceptor" evidence="1">
    <location>
        <position position="205"/>
    </location>
</feature>
<feature type="binding site" evidence="1">
    <location>
        <position position="29"/>
    </location>
    <ligand>
        <name>NADPH</name>
        <dbReference type="ChEBI" id="CHEBI:57783"/>
    </ligand>
</feature>
<feature type="binding site" evidence="1">
    <location>
        <position position="49"/>
    </location>
    <ligand>
        <name>NADPH</name>
        <dbReference type="ChEBI" id="CHEBI:57783"/>
    </ligand>
</feature>
<feature type="binding site" evidence="1">
    <location>
        <position position="122"/>
    </location>
    <ligand>
        <name>NADPH</name>
        <dbReference type="ChEBI" id="CHEBI:57783"/>
    </ligand>
</feature>
<feature type="binding site" evidence="1">
    <location>
        <position position="122"/>
    </location>
    <ligand>
        <name>sn-glycerol 3-phosphate</name>
        <dbReference type="ChEBI" id="CHEBI:57597"/>
    </ligand>
</feature>
<feature type="binding site" evidence="1">
    <location>
        <position position="150"/>
    </location>
    <ligand>
        <name>sn-glycerol 3-phosphate</name>
        <dbReference type="ChEBI" id="CHEBI:57597"/>
    </ligand>
</feature>
<feature type="binding site" evidence="1">
    <location>
        <position position="152"/>
    </location>
    <ligand>
        <name>sn-glycerol 3-phosphate</name>
        <dbReference type="ChEBI" id="CHEBI:57597"/>
    </ligand>
</feature>
<feature type="binding site" evidence="1">
    <location>
        <position position="154"/>
    </location>
    <ligand>
        <name>NADPH</name>
        <dbReference type="ChEBI" id="CHEBI:57783"/>
    </ligand>
</feature>
<feature type="binding site" evidence="1">
    <location>
        <position position="205"/>
    </location>
    <ligand>
        <name>sn-glycerol 3-phosphate</name>
        <dbReference type="ChEBI" id="CHEBI:57597"/>
    </ligand>
</feature>
<feature type="binding site" evidence="1">
    <location>
        <position position="258"/>
    </location>
    <ligand>
        <name>sn-glycerol 3-phosphate</name>
        <dbReference type="ChEBI" id="CHEBI:57597"/>
    </ligand>
</feature>
<feature type="binding site" evidence="1">
    <location>
        <position position="268"/>
    </location>
    <ligand>
        <name>sn-glycerol 3-phosphate</name>
        <dbReference type="ChEBI" id="CHEBI:57597"/>
    </ligand>
</feature>
<feature type="binding site" evidence="1">
    <location>
        <position position="269"/>
    </location>
    <ligand>
        <name>NADPH</name>
        <dbReference type="ChEBI" id="CHEBI:57783"/>
    </ligand>
</feature>
<feature type="binding site" evidence="1">
    <location>
        <position position="269"/>
    </location>
    <ligand>
        <name>sn-glycerol 3-phosphate</name>
        <dbReference type="ChEBI" id="CHEBI:57597"/>
    </ligand>
</feature>
<feature type="binding site" evidence="1">
    <location>
        <position position="270"/>
    </location>
    <ligand>
        <name>sn-glycerol 3-phosphate</name>
        <dbReference type="ChEBI" id="CHEBI:57597"/>
    </ligand>
</feature>
<feature type="binding site" evidence="1">
    <location>
        <position position="288"/>
    </location>
    <ligand>
        <name>NADPH</name>
        <dbReference type="ChEBI" id="CHEBI:57783"/>
    </ligand>
</feature>
<feature type="binding site" evidence="1">
    <location>
        <position position="290"/>
    </location>
    <ligand>
        <name>NADPH</name>
        <dbReference type="ChEBI" id="CHEBI:57783"/>
    </ligand>
</feature>
<gene>
    <name evidence="1" type="primary">gpsA</name>
    <name type="ordered locus">mlr4225</name>
</gene>
<reference key="1">
    <citation type="journal article" date="2000" name="DNA Res.">
        <title>Complete genome structure of the nitrogen-fixing symbiotic bacterium Mesorhizobium loti.</title>
        <authorList>
            <person name="Kaneko T."/>
            <person name="Nakamura Y."/>
            <person name="Sato S."/>
            <person name="Asamizu E."/>
            <person name="Kato T."/>
            <person name="Sasamoto S."/>
            <person name="Watanabe A."/>
            <person name="Idesawa K."/>
            <person name="Ishikawa A."/>
            <person name="Kawashima K."/>
            <person name="Kimura T."/>
            <person name="Kishida Y."/>
            <person name="Kiyokawa C."/>
            <person name="Kohara M."/>
            <person name="Matsumoto M."/>
            <person name="Matsuno A."/>
            <person name="Mochizuki Y."/>
            <person name="Nakayama S."/>
            <person name="Nakazaki N."/>
            <person name="Shimpo S."/>
            <person name="Sugimoto M."/>
            <person name="Takeuchi C."/>
            <person name="Yamada M."/>
            <person name="Tabata S."/>
        </authorList>
    </citation>
    <scope>NUCLEOTIDE SEQUENCE [LARGE SCALE GENOMIC DNA]</scope>
    <source>
        <strain>LMG 29417 / CECT 9101 / MAFF 303099</strain>
    </source>
</reference>
<comment type="function">
    <text evidence="1">Catalyzes the reduction of the glycolytic intermediate dihydroxyacetone phosphate (DHAP) to sn-glycerol 3-phosphate (G3P), the key precursor for phospholipid synthesis.</text>
</comment>
<comment type="catalytic activity">
    <reaction evidence="1">
        <text>sn-glycerol 3-phosphate + NAD(+) = dihydroxyacetone phosphate + NADH + H(+)</text>
        <dbReference type="Rhea" id="RHEA:11092"/>
        <dbReference type="ChEBI" id="CHEBI:15378"/>
        <dbReference type="ChEBI" id="CHEBI:57540"/>
        <dbReference type="ChEBI" id="CHEBI:57597"/>
        <dbReference type="ChEBI" id="CHEBI:57642"/>
        <dbReference type="ChEBI" id="CHEBI:57945"/>
        <dbReference type="EC" id="1.1.1.94"/>
    </reaction>
    <physiologicalReaction direction="right-to-left" evidence="1">
        <dbReference type="Rhea" id="RHEA:11094"/>
    </physiologicalReaction>
</comment>
<comment type="catalytic activity">
    <reaction evidence="1">
        <text>sn-glycerol 3-phosphate + NADP(+) = dihydroxyacetone phosphate + NADPH + H(+)</text>
        <dbReference type="Rhea" id="RHEA:11096"/>
        <dbReference type="ChEBI" id="CHEBI:15378"/>
        <dbReference type="ChEBI" id="CHEBI:57597"/>
        <dbReference type="ChEBI" id="CHEBI:57642"/>
        <dbReference type="ChEBI" id="CHEBI:57783"/>
        <dbReference type="ChEBI" id="CHEBI:58349"/>
        <dbReference type="EC" id="1.1.1.94"/>
    </reaction>
    <physiologicalReaction direction="right-to-left" evidence="1">
        <dbReference type="Rhea" id="RHEA:11098"/>
    </physiologicalReaction>
</comment>
<comment type="pathway">
    <text evidence="1">Membrane lipid metabolism; glycerophospholipid metabolism.</text>
</comment>
<comment type="subcellular location">
    <subcellularLocation>
        <location evidence="1">Cytoplasm</location>
    </subcellularLocation>
</comment>
<comment type="similarity">
    <text evidence="1">Belongs to the NAD-dependent glycerol-3-phosphate dehydrogenase family.</text>
</comment>
<sequence>MTGEAVSGQDVSNPGKSSWRVTVLGGGAWGTALALAMLRAGHKVRLFARDPQTVAAIGQGQNPRYLPGIAIAPGIEATSDIAAALSGADCVLAVTPAQSLRATLAVAKDNMPDGIPLVLCAKGIERDTGALLSAIVEEILPRNPVAALSGPSFATDVARGLPTAVVVAARDEALAADLAARFSAQNLRCYSSDDLIGVEIGGALKNVFAIAAGAVTGAGLGASAQAAMVTRGFVELRRIGAAFGARPETLMGLSGLGDLLLTCSSAQSRNFAYGLTLGQGKALAGLPLAEGVPTAAIAARIAVERGIDAPIIAAVAAILDGAITISQAVTALMTRPLKTETND</sequence>
<accession>P58142</accession>
<proteinExistence type="inferred from homology"/>
<keyword id="KW-0963">Cytoplasm</keyword>
<keyword id="KW-0444">Lipid biosynthesis</keyword>
<keyword id="KW-0443">Lipid metabolism</keyword>
<keyword id="KW-0520">NAD</keyword>
<keyword id="KW-0521">NADP</keyword>
<keyword id="KW-0547">Nucleotide-binding</keyword>
<keyword id="KW-0560">Oxidoreductase</keyword>
<keyword id="KW-0594">Phospholipid biosynthesis</keyword>
<keyword id="KW-1208">Phospholipid metabolism</keyword>
<dbReference type="EC" id="1.1.1.94" evidence="1"/>
<dbReference type="EMBL" id="BA000012">
    <property type="protein sequence ID" value="BAB50933.1"/>
    <property type="molecule type" value="Genomic_DNA"/>
</dbReference>
<dbReference type="RefSeq" id="WP_010912275.1">
    <property type="nucleotide sequence ID" value="NC_002678.2"/>
</dbReference>
<dbReference type="SMR" id="P58142"/>
<dbReference type="KEGG" id="mlo:mlr4225"/>
<dbReference type="PATRIC" id="fig|266835.9.peg.3336"/>
<dbReference type="eggNOG" id="COG0240">
    <property type="taxonomic scope" value="Bacteria"/>
</dbReference>
<dbReference type="HOGENOM" id="CLU_033449_0_2_5"/>
<dbReference type="UniPathway" id="UPA00940"/>
<dbReference type="Proteomes" id="UP000000552">
    <property type="component" value="Chromosome"/>
</dbReference>
<dbReference type="GO" id="GO:0005829">
    <property type="term" value="C:cytosol"/>
    <property type="evidence" value="ECO:0007669"/>
    <property type="project" value="TreeGrafter"/>
</dbReference>
<dbReference type="GO" id="GO:0047952">
    <property type="term" value="F:glycerol-3-phosphate dehydrogenase [NAD(P)+] activity"/>
    <property type="evidence" value="ECO:0007669"/>
    <property type="project" value="UniProtKB-UniRule"/>
</dbReference>
<dbReference type="GO" id="GO:0051287">
    <property type="term" value="F:NAD binding"/>
    <property type="evidence" value="ECO:0007669"/>
    <property type="project" value="InterPro"/>
</dbReference>
<dbReference type="GO" id="GO:0005975">
    <property type="term" value="P:carbohydrate metabolic process"/>
    <property type="evidence" value="ECO:0007669"/>
    <property type="project" value="InterPro"/>
</dbReference>
<dbReference type="GO" id="GO:0046167">
    <property type="term" value="P:glycerol-3-phosphate biosynthetic process"/>
    <property type="evidence" value="ECO:0007669"/>
    <property type="project" value="UniProtKB-UniRule"/>
</dbReference>
<dbReference type="GO" id="GO:0046168">
    <property type="term" value="P:glycerol-3-phosphate catabolic process"/>
    <property type="evidence" value="ECO:0007669"/>
    <property type="project" value="InterPro"/>
</dbReference>
<dbReference type="GO" id="GO:0006650">
    <property type="term" value="P:glycerophospholipid metabolic process"/>
    <property type="evidence" value="ECO:0007669"/>
    <property type="project" value="UniProtKB-UniRule"/>
</dbReference>
<dbReference type="GO" id="GO:0008654">
    <property type="term" value="P:phospholipid biosynthetic process"/>
    <property type="evidence" value="ECO:0007669"/>
    <property type="project" value="UniProtKB-KW"/>
</dbReference>
<dbReference type="FunFam" id="3.40.50.720:FF:000019">
    <property type="entry name" value="Glycerol-3-phosphate dehydrogenase [NAD(P)+]"/>
    <property type="match status" value="1"/>
</dbReference>
<dbReference type="Gene3D" id="1.10.1040.10">
    <property type="entry name" value="N-(1-d-carboxylethyl)-l-norvaline Dehydrogenase, domain 2"/>
    <property type="match status" value="1"/>
</dbReference>
<dbReference type="Gene3D" id="3.40.50.720">
    <property type="entry name" value="NAD(P)-binding Rossmann-like Domain"/>
    <property type="match status" value="1"/>
</dbReference>
<dbReference type="HAMAP" id="MF_00394">
    <property type="entry name" value="NAD_Glyc3P_dehydrog"/>
    <property type="match status" value="1"/>
</dbReference>
<dbReference type="InterPro" id="IPR008927">
    <property type="entry name" value="6-PGluconate_DH-like_C_sf"/>
</dbReference>
<dbReference type="InterPro" id="IPR013328">
    <property type="entry name" value="6PGD_dom2"/>
</dbReference>
<dbReference type="InterPro" id="IPR006168">
    <property type="entry name" value="G3P_DH_NAD-dep"/>
</dbReference>
<dbReference type="InterPro" id="IPR006109">
    <property type="entry name" value="G3P_DH_NAD-dep_C"/>
</dbReference>
<dbReference type="InterPro" id="IPR011128">
    <property type="entry name" value="G3P_DH_NAD-dep_N"/>
</dbReference>
<dbReference type="InterPro" id="IPR036291">
    <property type="entry name" value="NAD(P)-bd_dom_sf"/>
</dbReference>
<dbReference type="NCBIfam" id="NF000940">
    <property type="entry name" value="PRK00094.1-2"/>
    <property type="match status" value="1"/>
</dbReference>
<dbReference type="NCBIfam" id="NF000942">
    <property type="entry name" value="PRK00094.1-4"/>
    <property type="match status" value="1"/>
</dbReference>
<dbReference type="PANTHER" id="PTHR11728">
    <property type="entry name" value="GLYCEROL-3-PHOSPHATE DEHYDROGENASE"/>
    <property type="match status" value="1"/>
</dbReference>
<dbReference type="PANTHER" id="PTHR11728:SF1">
    <property type="entry name" value="GLYCEROL-3-PHOSPHATE DEHYDROGENASE [NAD(+)] 2, CHLOROPLASTIC"/>
    <property type="match status" value="1"/>
</dbReference>
<dbReference type="Pfam" id="PF07479">
    <property type="entry name" value="NAD_Gly3P_dh_C"/>
    <property type="match status" value="1"/>
</dbReference>
<dbReference type="Pfam" id="PF01210">
    <property type="entry name" value="NAD_Gly3P_dh_N"/>
    <property type="match status" value="1"/>
</dbReference>
<dbReference type="PIRSF" id="PIRSF000114">
    <property type="entry name" value="Glycerol-3-P_dh"/>
    <property type="match status" value="1"/>
</dbReference>
<dbReference type="PRINTS" id="PR00077">
    <property type="entry name" value="GPDHDRGNASE"/>
</dbReference>
<dbReference type="SUPFAM" id="SSF48179">
    <property type="entry name" value="6-phosphogluconate dehydrogenase C-terminal domain-like"/>
    <property type="match status" value="1"/>
</dbReference>
<dbReference type="SUPFAM" id="SSF51735">
    <property type="entry name" value="NAD(P)-binding Rossmann-fold domains"/>
    <property type="match status" value="1"/>
</dbReference>
<dbReference type="PROSITE" id="PS00957">
    <property type="entry name" value="NAD_G3PDH"/>
    <property type="match status" value="1"/>
</dbReference>
<evidence type="ECO:0000255" key="1">
    <source>
        <dbReference type="HAMAP-Rule" id="MF_00394"/>
    </source>
</evidence>